<dbReference type="EMBL" id="CU329671">
    <property type="protein sequence ID" value="CAB62098.1"/>
    <property type="molecule type" value="Genomic_DNA"/>
</dbReference>
<dbReference type="EMBL" id="AB027886">
    <property type="protein sequence ID" value="BAA87190.1"/>
    <property type="molecule type" value="Genomic_DNA"/>
</dbReference>
<dbReference type="PIR" id="T50385">
    <property type="entry name" value="T50385"/>
</dbReference>
<dbReference type="SMR" id="Q9USP9"/>
<dbReference type="BioGRID" id="277794">
    <property type="interactions" value="52"/>
</dbReference>
<dbReference type="FunCoup" id="Q9USP9">
    <property type="interactions" value="801"/>
</dbReference>
<dbReference type="IntAct" id="Q9USP9">
    <property type="interactions" value="4"/>
</dbReference>
<dbReference type="STRING" id="284812.Q9USP9"/>
<dbReference type="iPTMnet" id="Q9USP9"/>
<dbReference type="PaxDb" id="4896-SPBC902.04.1"/>
<dbReference type="EnsemblFungi" id="SPBC902.04.1">
    <property type="protein sequence ID" value="SPBC902.04.1:pep"/>
    <property type="gene ID" value="SPBC902.04"/>
</dbReference>
<dbReference type="KEGG" id="spo:2541281"/>
<dbReference type="PomBase" id="SPBC902.04"/>
<dbReference type="VEuPathDB" id="FungiDB:SPBC902.04"/>
<dbReference type="eggNOG" id="KOG2135">
    <property type="taxonomic scope" value="Eukaryota"/>
</dbReference>
<dbReference type="HOGENOM" id="CLU_017928_1_0_1"/>
<dbReference type="InParanoid" id="Q9USP9"/>
<dbReference type="OMA" id="PSAKCAF"/>
<dbReference type="PhylomeDB" id="Q9USP9"/>
<dbReference type="PRO" id="PR:Q9USP9"/>
<dbReference type="Proteomes" id="UP000002485">
    <property type="component" value="Chromosome II"/>
</dbReference>
<dbReference type="GO" id="GO:0000785">
    <property type="term" value="C:chromatin"/>
    <property type="evidence" value="ECO:0000314"/>
    <property type="project" value="PomBase"/>
</dbReference>
<dbReference type="GO" id="GO:0033620">
    <property type="term" value="C:Mei2 nuclear dot complex"/>
    <property type="evidence" value="ECO:0000314"/>
    <property type="project" value="PomBase"/>
</dbReference>
<dbReference type="GO" id="GO:1990477">
    <property type="term" value="C:MTREC complex"/>
    <property type="evidence" value="ECO:0000314"/>
    <property type="project" value="PomBase"/>
</dbReference>
<dbReference type="GO" id="GO:0016604">
    <property type="term" value="C:nuclear body"/>
    <property type="evidence" value="ECO:0000314"/>
    <property type="project" value="PomBase"/>
</dbReference>
<dbReference type="GO" id="GO:0005634">
    <property type="term" value="C:nucleus"/>
    <property type="evidence" value="ECO:0000314"/>
    <property type="project" value="PomBase"/>
</dbReference>
<dbReference type="GO" id="GO:0003723">
    <property type="term" value="F:RNA binding"/>
    <property type="evidence" value="ECO:0000318"/>
    <property type="project" value="GO_Central"/>
</dbReference>
<dbReference type="GO" id="GO:0071039">
    <property type="term" value="P:nuclear polyadenylation-dependent CUT catabolic process"/>
    <property type="evidence" value="ECO:0000303"/>
    <property type="project" value="PomBase"/>
</dbReference>
<dbReference type="CDD" id="cd12257">
    <property type="entry name" value="RRM1_RBM26_like"/>
    <property type="match status" value="1"/>
</dbReference>
<dbReference type="CDD" id="cd21612">
    <property type="entry name" value="RRM_AtRDRP1_like"/>
    <property type="match status" value="1"/>
</dbReference>
<dbReference type="Gene3D" id="3.30.70.330">
    <property type="match status" value="1"/>
</dbReference>
<dbReference type="InterPro" id="IPR012677">
    <property type="entry name" value="Nucleotide-bd_a/b_plait_sf"/>
</dbReference>
<dbReference type="InterPro" id="IPR002483">
    <property type="entry name" value="PWI_dom"/>
</dbReference>
<dbReference type="InterPro" id="IPR035979">
    <property type="entry name" value="RBD_domain_sf"/>
</dbReference>
<dbReference type="InterPro" id="IPR045137">
    <property type="entry name" value="RBM26/27"/>
</dbReference>
<dbReference type="InterPro" id="IPR000504">
    <property type="entry name" value="RRM_dom"/>
</dbReference>
<dbReference type="PANTHER" id="PTHR14398">
    <property type="entry name" value="RNA RECOGNITION RRM/RNP DOMAIN"/>
    <property type="match status" value="1"/>
</dbReference>
<dbReference type="PANTHER" id="PTHR14398:SF0">
    <property type="entry name" value="ZINC FINGER PROTEIN SWM"/>
    <property type="match status" value="1"/>
</dbReference>
<dbReference type="Pfam" id="PF01480">
    <property type="entry name" value="PWI"/>
    <property type="match status" value="1"/>
</dbReference>
<dbReference type="Pfam" id="PF00076">
    <property type="entry name" value="RRM_1"/>
    <property type="match status" value="1"/>
</dbReference>
<dbReference type="SMART" id="SM00360">
    <property type="entry name" value="RRM"/>
    <property type="match status" value="1"/>
</dbReference>
<dbReference type="SUPFAM" id="SSF54928">
    <property type="entry name" value="RNA-binding domain, RBD"/>
    <property type="match status" value="1"/>
</dbReference>
<dbReference type="PROSITE" id="PS50102">
    <property type="entry name" value="RRM"/>
    <property type="match status" value="1"/>
</dbReference>
<evidence type="ECO:0000255" key="1">
    <source>
        <dbReference type="PROSITE-ProRule" id="PRU00176"/>
    </source>
</evidence>
<evidence type="ECO:0000256" key="2">
    <source>
        <dbReference type="SAM" id="MobiDB-lite"/>
    </source>
</evidence>
<evidence type="ECO:0000269" key="3">
    <source>
    </source>
</evidence>
<evidence type="ECO:0000269" key="4">
    <source>
    </source>
</evidence>
<feature type="chain" id="PRO_0000082026" description="Uncharacterized RNA-binding protein C902.04">
    <location>
        <begin position="1"/>
        <end position="589"/>
    </location>
</feature>
<feature type="domain" description="RRM" evidence="1">
    <location>
        <begin position="242"/>
        <end position="314"/>
    </location>
</feature>
<feature type="region of interest" description="Disordered" evidence="2">
    <location>
        <begin position="322"/>
        <end position="348"/>
    </location>
</feature>
<feature type="region of interest" description="Disordered" evidence="2">
    <location>
        <begin position="443"/>
        <end position="465"/>
    </location>
</feature>
<feature type="region of interest" description="Disordered" evidence="2">
    <location>
        <begin position="566"/>
        <end position="589"/>
    </location>
</feature>
<feature type="compositionally biased region" description="Low complexity" evidence="2">
    <location>
        <begin position="330"/>
        <end position="340"/>
    </location>
</feature>
<feature type="compositionally biased region" description="Polar residues" evidence="2">
    <location>
        <begin position="566"/>
        <end position="579"/>
    </location>
</feature>
<feature type="modified residue" description="Phosphoserine" evidence="4">
    <location>
        <position position="330"/>
    </location>
</feature>
<feature type="modified residue" description="Phosphothreonine" evidence="4">
    <location>
        <position position="332"/>
    </location>
</feature>
<feature type="modified residue" description="Phosphoserine" evidence="4">
    <location>
        <position position="334"/>
    </location>
</feature>
<keyword id="KW-0539">Nucleus</keyword>
<keyword id="KW-0597">Phosphoprotein</keyword>
<keyword id="KW-1185">Reference proteome</keyword>
<keyword id="KW-0694">RNA-binding</keyword>
<gene>
    <name type="ORF">SPBC902.04</name>
</gene>
<sequence length="589" mass="66899">MPLFLEEHAEYLKRYLEQALEPISDADASVLSDYAMALLRHDSSEEEVRQLCYSQLEDFLRQETIPFVDKIFDVLREKSYLEGASNMPSTGMVTEEVSRYSPTSSMIPATNSMETNFNNSLPAVGKTNTFPSQVPNMFGPPLYHPAATAPSEFMPSIPGFGNLPNPAMPPIPFLPFNPAAQPPFPPPFKMRGKRGFGMRHEHNSELRRHSPGNRRFNPYKAYPQPHLGHRFSRNAGNDPTSTALEVRNIPEEHFNEENIRSFFSKFGVLEKVELNPTHHSCVLEFTSHEAANNAWSSPEPIFNNRFIKIFWYNPSKGFHNRPKKFASHKSPTTSDSSNVESSEDVDPASLLQNEEFHKLIEERQRQHEERLKRINANKKALEELNQKKRELAQQQLKEQELLMQKIKETDRSGNKRLMLLETQHSLLKAEADCLGLPVSNVSESPAASNGSHHPYASGLPQRGTNTFFRGRGRGRGDMFASMSIDNRPTKLRVINVSPEKNEALLQYLFTVGGYEEITEPSTTERLISFQNRNSAEKFFGGVRNVEKLQELELAWVPKTAVTTNTTSMETGESNTSDNMNIEVEEGRWR</sequence>
<protein>
    <recommendedName>
        <fullName>Uncharacterized RNA-binding protein C902.04</fullName>
    </recommendedName>
</protein>
<accession>Q9USP9</accession>
<accession>Q9UU06</accession>
<comment type="interaction">
    <interactant intactId="EBI-8993741">
        <id>Q9USP9</id>
    </interactant>
    <interactant intactId="EBI-7997255">
        <id>O14327</id>
        <label>pab2</label>
    </interactant>
    <organismsDiffer>false</organismsDiffer>
    <experiments>2</experiments>
</comment>
<comment type="interaction">
    <interactant intactId="EBI-8993741">
        <id>Q9USP9</id>
    </interactant>
    <interactant intactId="EBI-1117407">
        <id>Q9UTR8</id>
        <label>red1</label>
    </interactant>
    <organismsDiffer>false</organismsDiffer>
    <experiments>3</experiments>
</comment>
<comment type="subcellular location">
    <subcellularLocation>
        <location evidence="3">Nucleus</location>
    </subcellularLocation>
</comment>
<organism>
    <name type="scientific">Schizosaccharomyces pombe (strain 972 / ATCC 24843)</name>
    <name type="common">Fission yeast</name>
    <dbReference type="NCBI Taxonomy" id="284812"/>
    <lineage>
        <taxon>Eukaryota</taxon>
        <taxon>Fungi</taxon>
        <taxon>Dikarya</taxon>
        <taxon>Ascomycota</taxon>
        <taxon>Taphrinomycotina</taxon>
        <taxon>Schizosaccharomycetes</taxon>
        <taxon>Schizosaccharomycetales</taxon>
        <taxon>Schizosaccharomycetaceae</taxon>
        <taxon>Schizosaccharomyces</taxon>
    </lineage>
</organism>
<reference key="1">
    <citation type="journal article" date="2002" name="Nature">
        <title>The genome sequence of Schizosaccharomyces pombe.</title>
        <authorList>
            <person name="Wood V."/>
            <person name="Gwilliam R."/>
            <person name="Rajandream M.A."/>
            <person name="Lyne M.H."/>
            <person name="Lyne R."/>
            <person name="Stewart A."/>
            <person name="Sgouros J.G."/>
            <person name="Peat N."/>
            <person name="Hayles J."/>
            <person name="Baker S.G."/>
            <person name="Basham D."/>
            <person name="Bowman S."/>
            <person name="Brooks K."/>
            <person name="Brown D."/>
            <person name="Brown S."/>
            <person name="Chillingworth T."/>
            <person name="Churcher C.M."/>
            <person name="Collins M."/>
            <person name="Connor R."/>
            <person name="Cronin A."/>
            <person name="Davis P."/>
            <person name="Feltwell T."/>
            <person name="Fraser A."/>
            <person name="Gentles S."/>
            <person name="Goble A."/>
            <person name="Hamlin N."/>
            <person name="Harris D.E."/>
            <person name="Hidalgo J."/>
            <person name="Hodgson G."/>
            <person name="Holroyd S."/>
            <person name="Hornsby T."/>
            <person name="Howarth S."/>
            <person name="Huckle E.J."/>
            <person name="Hunt S."/>
            <person name="Jagels K."/>
            <person name="James K.D."/>
            <person name="Jones L."/>
            <person name="Jones M."/>
            <person name="Leather S."/>
            <person name="McDonald S."/>
            <person name="McLean J."/>
            <person name="Mooney P."/>
            <person name="Moule S."/>
            <person name="Mungall K.L."/>
            <person name="Murphy L.D."/>
            <person name="Niblett D."/>
            <person name="Odell C."/>
            <person name="Oliver K."/>
            <person name="O'Neil S."/>
            <person name="Pearson D."/>
            <person name="Quail M.A."/>
            <person name="Rabbinowitsch E."/>
            <person name="Rutherford K.M."/>
            <person name="Rutter S."/>
            <person name="Saunders D."/>
            <person name="Seeger K."/>
            <person name="Sharp S."/>
            <person name="Skelton J."/>
            <person name="Simmonds M.N."/>
            <person name="Squares R."/>
            <person name="Squares S."/>
            <person name="Stevens K."/>
            <person name="Taylor K."/>
            <person name="Taylor R.G."/>
            <person name="Tivey A."/>
            <person name="Walsh S.V."/>
            <person name="Warren T."/>
            <person name="Whitehead S."/>
            <person name="Woodward J.R."/>
            <person name="Volckaert G."/>
            <person name="Aert R."/>
            <person name="Robben J."/>
            <person name="Grymonprez B."/>
            <person name="Weltjens I."/>
            <person name="Vanstreels E."/>
            <person name="Rieger M."/>
            <person name="Schaefer M."/>
            <person name="Mueller-Auer S."/>
            <person name="Gabel C."/>
            <person name="Fuchs M."/>
            <person name="Duesterhoeft A."/>
            <person name="Fritzc C."/>
            <person name="Holzer E."/>
            <person name="Moestl D."/>
            <person name="Hilbert H."/>
            <person name="Borzym K."/>
            <person name="Langer I."/>
            <person name="Beck A."/>
            <person name="Lehrach H."/>
            <person name="Reinhardt R."/>
            <person name="Pohl T.M."/>
            <person name="Eger P."/>
            <person name="Zimmermann W."/>
            <person name="Wedler H."/>
            <person name="Wambutt R."/>
            <person name="Purnelle B."/>
            <person name="Goffeau A."/>
            <person name="Cadieu E."/>
            <person name="Dreano S."/>
            <person name="Gloux S."/>
            <person name="Lelaure V."/>
            <person name="Mottier S."/>
            <person name="Galibert F."/>
            <person name="Aves S.J."/>
            <person name="Xiang Z."/>
            <person name="Hunt C."/>
            <person name="Moore K."/>
            <person name="Hurst S.M."/>
            <person name="Lucas M."/>
            <person name="Rochet M."/>
            <person name="Gaillardin C."/>
            <person name="Tallada V.A."/>
            <person name="Garzon A."/>
            <person name="Thode G."/>
            <person name="Daga R.R."/>
            <person name="Cruzado L."/>
            <person name="Jimenez J."/>
            <person name="Sanchez M."/>
            <person name="del Rey F."/>
            <person name="Benito J."/>
            <person name="Dominguez A."/>
            <person name="Revuelta J.L."/>
            <person name="Moreno S."/>
            <person name="Armstrong J."/>
            <person name="Forsburg S.L."/>
            <person name="Cerutti L."/>
            <person name="Lowe T."/>
            <person name="McCombie W.R."/>
            <person name="Paulsen I."/>
            <person name="Potashkin J."/>
            <person name="Shpakovski G.V."/>
            <person name="Ussery D."/>
            <person name="Barrell B.G."/>
            <person name="Nurse P."/>
        </authorList>
    </citation>
    <scope>NUCLEOTIDE SEQUENCE [LARGE SCALE GENOMIC DNA]</scope>
    <source>
        <strain>972 / ATCC 24843</strain>
    </source>
</reference>
<reference key="2">
    <citation type="journal article" date="2000" name="Genes Cells">
        <title>Large-scale screening of intracellular protein localization in living fission yeast cells by the use of a GFP-fusion genomic DNA library.</title>
        <authorList>
            <person name="Ding D.-Q."/>
            <person name="Tomita Y."/>
            <person name="Yamamoto A."/>
            <person name="Chikashige Y."/>
            <person name="Haraguchi T."/>
            <person name="Hiraoka Y."/>
        </authorList>
    </citation>
    <scope>NUCLEOTIDE SEQUENCE [LARGE SCALE GENOMIC DNA] OF 85-238</scope>
    <scope>SUBCELLULAR LOCATION</scope>
    <source>
        <strain>ATCC 38364 / 968</strain>
    </source>
</reference>
<reference key="3">
    <citation type="journal article" date="2008" name="J. Proteome Res.">
        <title>Phosphoproteome analysis of fission yeast.</title>
        <authorList>
            <person name="Wilson-Grady J.T."/>
            <person name="Villen J."/>
            <person name="Gygi S.P."/>
        </authorList>
    </citation>
    <scope>PHOSPHORYLATION [LARGE SCALE ANALYSIS] AT SER-330; THR-332 AND SER-334</scope>
    <scope>IDENTIFICATION BY MASS SPECTROMETRY</scope>
</reference>
<name>YHP4_SCHPO</name>
<proteinExistence type="evidence at protein level"/>